<gene>
    <name evidence="1" type="primary">rhaA</name>
    <name type="ordered locus">ESA_03849</name>
</gene>
<comment type="function">
    <text evidence="1">Catalyzes the interconversion of L-rhamnose and L-rhamnulose.</text>
</comment>
<comment type="catalytic activity">
    <reaction evidence="1">
        <text>L-rhamnopyranose = L-rhamnulose</text>
        <dbReference type="Rhea" id="RHEA:23160"/>
        <dbReference type="ChEBI" id="CHEBI:17897"/>
        <dbReference type="ChEBI" id="CHEBI:62346"/>
        <dbReference type="EC" id="5.3.1.14"/>
    </reaction>
</comment>
<comment type="cofactor">
    <cofactor evidence="1">
        <name>Mn(2+)</name>
        <dbReference type="ChEBI" id="CHEBI:29035"/>
    </cofactor>
    <text evidence="1">Binds 1 Mn(2+) ion per subunit.</text>
</comment>
<comment type="pathway">
    <text evidence="1">Carbohydrate degradation; L-rhamnose degradation; glycerone phosphate from L-rhamnose: step 1/3.</text>
</comment>
<comment type="subunit">
    <text evidence="1">Homotetramer.</text>
</comment>
<comment type="subcellular location">
    <subcellularLocation>
        <location evidence="1">Cytoplasm</location>
    </subcellularLocation>
</comment>
<comment type="similarity">
    <text evidence="1">Belongs to the rhamnose isomerase family.</text>
</comment>
<dbReference type="EC" id="5.3.1.14" evidence="1"/>
<dbReference type="EMBL" id="CP000783">
    <property type="protein sequence ID" value="ABU79035.1"/>
    <property type="molecule type" value="Genomic_DNA"/>
</dbReference>
<dbReference type="RefSeq" id="WP_012126097.1">
    <property type="nucleotide sequence ID" value="NC_009778.1"/>
</dbReference>
<dbReference type="SMR" id="A7ML61"/>
<dbReference type="KEGG" id="esa:ESA_03849"/>
<dbReference type="PATRIC" id="fig|290339.8.peg.3421"/>
<dbReference type="HOGENOM" id="CLU_052790_0_0_6"/>
<dbReference type="UniPathway" id="UPA00541">
    <property type="reaction ID" value="UER00601"/>
</dbReference>
<dbReference type="Proteomes" id="UP000000260">
    <property type="component" value="Chromosome"/>
</dbReference>
<dbReference type="GO" id="GO:0005737">
    <property type="term" value="C:cytoplasm"/>
    <property type="evidence" value="ECO:0007669"/>
    <property type="project" value="UniProtKB-SubCell"/>
</dbReference>
<dbReference type="GO" id="GO:0008740">
    <property type="term" value="F:L-rhamnose isomerase activity"/>
    <property type="evidence" value="ECO:0007669"/>
    <property type="project" value="UniProtKB-UniRule"/>
</dbReference>
<dbReference type="GO" id="GO:0030145">
    <property type="term" value="F:manganese ion binding"/>
    <property type="evidence" value="ECO:0007669"/>
    <property type="project" value="UniProtKB-UniRule"/>
</dbReference>
<dbReference type="GO" id="GO:0019324">
    <property type="term" value="P:L-lyxose metabolic process"/>
    <property type="evidence" value="ECO:0007669"/>
    <property type="project" value="TreeGrafter"/>
</dbReference>
<dbReference type="GO" id="GO:0019301">
    <property type="term" value="P:rhamnose catabolic process"/>
    <property type="evidence" value="ECO:0007669"/>
    <property type="project" value="UniProtKB-UniRule"/>
</dbReference>
<dbReference type="FunFam" id="3.20.20.150:FF:000006">
    <property type="entry name" value="L-rhamnose isomerase"/>
    <property type="match status" value="1"/>
</dbReference>
<dbReference type="Gene3D" id="3.20.20.150">
    <property type="entry name" value="Divalent-metal-dependent TIM barrel enzymes"/>
    <property type="match status" value="1"/>
</dbReference>
<dbReference type="HAMAP" id="MF_00541">
    <property type="entry name" value="RhaA"/>
    <property type="match status" value="1"/>
</dbReference>
<dbReference type="InterPro" id="IPR050337">
    <property type="entry name" value="L-rhamnose_isomerase"/>
</dbReference>
<dbReference type="InterPro" id="IPR009308">
    <property type="entry name" value="Rhamnose_isomerase"/>
</dbReference>
<dbReference type="InterPro" id="IPR036237">
    <property type="entry name" value="Xyl_isomerase-like_sf"/>
</dbReference>
<dbReference type="NCBIfam" id="NF002203">
    <property type="entry name" value="PRK01076.1"/>
    <property type="match status" value="1"/>
</dbReference>
<dbReference type="NCBIfam" id="TIGR01748">
    <property type="entry name" value="rhaA"/>
    <property type="match status" value="1"/>
</dbReference>
<dbReference type="PANTHER" id="PTHR30268">
    <property type="entry name" value="L-RHAMNOSE ISOMERASE"/>
    <property type="match status" value="1"/>
</dbReference>
<dbReference type="PANTHER" id="PTHR30268:SF0">
    <property type="entry name" value="L-RHAMNOSE ISOMERASE"/>
    <property type="match status" value="1"/>
</dbReference>
<dbReference type="Pfam" id="PF06134">
    <property type="entry name" value="RhaA"/>
    <property type="match status" value="1"/>
</dbReference>
<dbReference type="SUPFAM" id="SSF51658">
    <property type="entry name" value="Xylose isomerase-like"/>
    <property type="match status" value="1"/>
</dbReference>
<protein>
    <recommendedName>
        <fullName evidence="1">L-rhamnose isomerase</fullName>
        <ecNumber evidence="1">5.3.1.14</ecNumber>
    </recommendedName>
</protein>
<sequence length="418" mass="47021">MTTHIHQAWELAKQRFAAVGVDAEAALNQLDRLPVSMHCWQGDDVAGFENPQGQLTGGIQATGNYPGKARNAEELRADLDQALRLIPGPKRLNLHAIYLESDTPVARNEIKPAHFANWVAWARERQLGLDFNPSCFSHPLSADGFTLSHPNPEIRQFWIEHCQASRRVSASFGEQLGTPSVMNIWIPDGMKDTPVDRLAPRRRLLAALDEVIREKLNPAHHIDAVESKLFGIGAESYTVGSNEFYLGYAASRQTALCLDAGHFHPTEVISDKISAAILYVPRLLLHVSRPVRWDSDHVVLLDDETQAIAGEIIRHDLFDRVHIGLDFFDASINRIAAWVIGTRNMKKALLRALLEPTAQLRQLELDGDYTARLALLEEQKSLPWQAVWEMYCERHDTPADAAWLSAVRHYEQHVLSTR</sequence>
<evidence type="ECO:0000255" key="1">
    <source>
        <dbReference type="HAMAP-Rule" id="MF_00541"/>
    </source>
</evidence>
<reference key="1">
    <citation type="journal article" date="2010" name="PLoS ONE">
        <title>Genome sequence of Cronobacter sakazakii BAA-894 and comparative genomic hybridization analysis with other Cronobacter species.</title>
        <authorList>
            <person name="Kucerova E."/>
            <person name="Clifton S.W."/>
            <person name="Xia X.Q."/>
            <person name="Long F."/>
            <person name="Porwollik S."/>
            <person name="Fulton L."/>
            <person name="Fronick C."/>
            <person name="Minx P."/>
            <person name="Kyung K."/>
            <person name="Warren W."/>
            <person name="Fulton R."/>
            <person name="Feng D."/>
            <person name="Wollam A."/>
            <person name="Shah N."/>
            <person name="Bhonagiri V."/>
            <person name="Nash W.E."/>
            <person name="Hallsworth-Pepin K."/>
            <person name="Wilson R.K."/>
            <person name="McClelland M."/>
            <person name="Forsythe S.J."/>
        </authorList>
    </citation>
    <scope>NUCLEOTIDE SEQUENCE [LARGE SCALE GENOMIC DNA]</scope>
    <source>
        <strain>ATCC BAA-894</strain>
    </source>
</reference>
<organism>
    <name type="scientific">Cronobacter sakazakii (strain ATCC BAA-894)</name>
    <name type="common">Enterobacter sakazakii</name>
    <dbReference type="NCBI Taxonomy" id="290339"/>
    <lineage>
        <taxon>Bacteria</taxon>
        <taxon>Pseudomonadati</taxon>
        <taxon>Pseudomonadota</taxon>
        <taxon>Gammaproteobacteria</taxon>
        <taxon>Enterobacterales</taxon>
        <taxon>Enterobacteriaceae</taxon>
        <taxon>Cronobacter</taxon>
    </lineage>
</organism>
<feature type="chain" id="PRO_1000017718" description="L-rhamnose isomerase">
    <location>
        <begin position="1"/>
        <end position="418"/>
    </location>
</feature>
<feature type="binding site" evidence="1">
    <location>
        <position position="262"/>
    </location>
    <ligand>
        <name>Mn(2+)</name>
        <dbReference type="ChEBI" id="CHEBI:29035"/>
    </ligand>
</feature>
<feature type="binding site" evidence="1">
    <location>
        <position position="294"/>
    </location>
    <ligand>
        <name>Mn(2+)</name>
        <dbReference type="ChEBI" id="CHEBI:29035"/>
    </ligand>
</feature>
<feature type="binding site" evidence="1">
    <location>
        <position position="296"/>
    </location>
    <ligand>
        <name>Mn(2+)</name>
        <dbReference type="ChEBI" id="CHEBI:29035"/>
    </ligand>
</feature>
<keyword id="KW-0963">Cytoplasm</keyword>
<keyword id="KW-0413">Isomerase</keyword>
<keyword id="KW-0464">Manganese</keyword>
<keyword id="KW-0479">Metal-binding</keyword>
<keyword id="KW-1185">Reference proteome</keyword>
<keyword id="KW-0684">Rhamnose metabolism</keyword>
<proteinExistence type="inferred from homology"/>
<accession>A7ML61</accession>
<name>RHAA_CROS8</name>